<comment type="function">
    <text evidence="1">Hydrolyzes pyrophosphate formed during P-Ser-HPr dephosphorylation by HPrK/P. Might play a role in controlling the intracellular pyrophosphate pool.</text>
</comment>
<comment type="catalytic activity">
    <reaction evidence="1">
        <text>diphosphate + H2O = 2 phosphate + H(+)</text>
        <dbReference type="Rhea" id="RHEA:24576"/>
        <dbReference type="ChEBI" id="CHEBI:15377"/>
        <dbReference type="ChEBI" id="CHEBI:15378"/>
        <dbReference type="ChEBI" id="CHEBI:33019"/>
        <dbReference type="ChEBI" id="CHEBI:43474"/>
        <dbReference type="EC" id="3.6.1.1"/>
    </reaction>
</comment>
<comment type="cofactor">
    <cofactor evidence="1">
        <name>Mg(2+)</name>
        <dbReference type="ChEBI" id="CHEBI:18420"/>
    </cofactor>
</comment>
<comment type="similarity">
    <text evidence="1">Belongs to the HAD-like hydrolase superfamily. PpaX family.</text>
</comment>
<evidence type="ECO:0000255" key="1">
    <source>
        <dbReference type="HAMAP-Rule" id="MF_01250"/>
    </source>
</evidence>
<keyword id="KW-0378">Hydrolase</keyword>
<keyword id="KW-0460">Magnesium</keyword>
<keyword id="KW-1185">Reference proteome</keyword>
<feature type="chain" id="PRO_0000056837" description="Pyrophosphatase PpaX">
    <location>
        <begin position="1"/>
        <end position="215"/>
    </location>
</feature>
<feature type="active site" description="Nucleophile" evidence="1">
    <location>
        <position position="9"/>
    </location>
</feature>
<reference key="1">
    <citation type="journal article" date="2000" name="Nucleic Acids Res.">
        <title>Complete genome sequence of the alkaliphilic bacterium Bacillus halodurans and genomic sequence comparison with Bacillus subtilis.</title>
        <authorList>
            <person name="Takami H."/>
            <person name="Nakasone K."/>
            <person name="Takaki Y."/>
            <person name="Maeno G."/>
            <person name="Sasaki R."/>
            <person name="Masui N."/>
            <person name="Fuji F."/>
            <person name="Hirama C."/>
            <person name="Nakamura Y."/>
            <person name="Ogasawara N."/>
            <person name="Kuhara S."/>
            <person name="Horikoshi K."/>
        </authorList>
    </citation>
    <scope>NUCLEOTIDE SEQUENCE [LARGE SCALE GENOMIC DNA]</scope>
    <source>
        <strain>ATCC BAA-125 / DSM 18197 / FERM 7344 / JCM 9153 / C-125</strain>
    </source>
</reference>
<sequence length="215" mass="24216">MEINTVLFDLDGTLINTNELIISSFLHTFETYYPGKYGRKDAIECIGPPLTDSFKRLDPERVEEMVATYRKHNHAHHDKLVEPYEGVYETVKTLHEQGFKLAIVTTKIRETAMKGLKLFGLDEFFDVIVALDDVENVKPNPEPLEKAMNALGAKKEETIMVGDNSHDILGGKNAGVKTAVVGYAIRGEDYVRQFDPDYVLRSMPDLLDIVGVKAR</sequence>
<dbReference type="EC" id="3.6.1.1" evidence="1"/>
<dbReference type="EMBL" id="BA000004">
    <property type="protein sequence ID" value="BAB07306.1"/>
    <property type="molecule type" value="Genomic_DNA"/>
</dbReference>
<dbReference type="PIR" id="C84098">
    <property type="entry name" value="C84098"/>
</dbReference>
<dbReference type="RefSeq" id="WP_010899715.1">
    <property type="nucleotide sequence ID" value="NC_002570.2"/>
</dbReference>
<dbReference type="SMR" id="Q9K6Y7"/>
<dbReference type="STRING" id="272558.gene:10729500"/>
<dbReference type="GeneID" id="87599115"/>
<dbReference type="KEGG" id="bha:BH3587"/>
<dbReference type="eggNOG" id="COG0546">
    <property type="taxonomic scope" value="Bacteria"/>
</dbReference>
<dbReference type="HOGENOM" id="CLU_045011_19_3_9"/>
<dbReference type="OrthoDB" id="9807630at2"/>
<dbReference type="Proteomes" id="UP000001258">
    <property type="component" value="Chromosome"/>
</dbReference>
<dbReference type="GO" id="GO:0005829">
    <property type="term" value="C:cytosol"/>
    <property type="evidence" value="ECO:0007669"/>
    <property type="project" value="TreeGrafter"/>
</dbReference>
<dbReference type="GO" id="GO:0004427">
    <property type="term" value="F:inorganic diphosphate phosphatase activity"/>
    <property type="evidence" value="ECO:0007669"/>
    <property type="project" value="UniProtKB-UniRule"/>
</dbReference>
<dbReference type="GO" id="GO:0000287">
    <property type="term" value="F:magnesium ion binding"/>
    <property type="evidence" value="ECO:0007669"/>
    <property type="project" value="UniProtKB-UniRule"/>
</dbReference>
<dbReference type="GO" id="GO:0008967">
    <property type="term" value="F:phosphoglycolate phosphatase activity"/>
    <property type="evidence" value="ECO:0007669"/>
    <property type="project" value="TreeGrafter"/>
</dbReference>
<dbReference type="GO" id="GO:0006281">
    <property type="term" value="P:DNA repair"/>
    <property type="evidence" value="ECO:0007669"/>
    <property type="project" value="TreeGrafter"/>
</dbReference>
<dbReference type="CDD" id="cd02616">
    <property type="entry name" value="HAD_PPase"/>
    <property type="match status" value="1"/>
</dbReference>
<dbReference type="FunFam" id="3.40.50.1000:FF:000022">
    <property type="entry name" value="Phosphoglycolate phosphatase"/>
    <property type="match status" value="1"/>
</dbReference>
<dbReference type="Gene3D" id="3.40.50.1000">
    <property type="entry name" value="HAD superfamily/HAD-like"/>
    <property type="match status" value="1"/>
</dbReference>
<dbReference type="Gene3D" id="1.10.150.240">
    <property type="entry name" value="Putative phosphatase, domain 2"/>
    <property type="match status" value="1"/>
</dbReference>
<dbReference type="HAMAP" id="MF_01250">
    <property type="entry name" value="Pyrophosphat_PpaX"/>
    <property type="match status" value="1"/>
</dbReference>
<dbReference type="InterPro" id="IPR050155">
    <property type="entry name" value="HAD-like_hydrolase_sf"/>
</dbReference>
<dbReference type="InterPro" id="IPR036412">
    <property type="entry name" value="HAD-like_sf"/>
</dbReference>
<dbReference type="InterPro" id="IPR006439">
    <property type="entry name" value="HAD-SF_hydro_IA"/>
</dbReference>
<dbReference type="InterPro" id="IPR006549">
    <property type="entry name" value="HAD-SF_hydro_IIIA"/>
</dbReference>
<dbReference type="InterPro" id="IPR041492">
    <property type="entry name" value="HAD_2"/>
</dbReference>
<dbReference type="InterPro" id="IPR023214">
    <property type="entry name" value="HAD_sf"/>
</dbReference>
<dbReference type="InterPro" id="IPR023198">
    <property type="entry name" value="PGP-like_dom2"/>
</dbReference>
<dbReference type="InterPro" id="IPR023733">
    <property type="entry name" value="Pyrophosphatase_Ppax"/>
</dbReference>
<dbReference type="NCBIfam" id="TIGR01549">
    <property type="entry name" value="HAD-SF-IA-v1"/>
    <property type="match status" value="1"/>
</dbReference>
<dbReference type="NCBIfam" id="TIGR01509">
    <property type="entry name" value="HAD-SF-IA-v3"/>
    <property type="match status" value="1"/>
</dbReference>
<dbReference type="NCBIfam" id="TIGR01662">
    <property type="entry name" value="HAD-SF-IIIA"/>
    <property type="match status" value="1"/>
</dbReference>
<dbReference type="NCBIfam" id="NF009804">
    <property type="entry name" value="PRK13288.1"/>
    <property type="match status" value="1"/>
</dbReference>
<dbReference type="PANTHER" id="PTHR43434">
    <property type="entry name" value="PHOSPHOGLYCOLATE PHOSPHATASE"/>
    <property type="match status" value="1"/>
</dbReference>
<dbReference type="PANTHER" id="PTHR43434:SF26">
    <property type="entry name" value="PYROPHOSPHATASE PPAX"/>
    <property type="match status" value="1"/>
</dbReference>
<dbReference type="Pfam" id="PF13419">
    <property type="entry name" value="HAD_2"/>
    <property type="match status" value="1"/>
</dbReference>
<dbReference type="PRINTS" id="PR00413">
    <property type="entry name" value="HADHALOGNASE"/>
</dbReference>
<dbReference type="SFLD" id="SFLDG01135">
    <property type="entry name" value="C1.5.6:_HAD__Beta-PGM__Phospha"/>
    <property type="match status" value="1"/>
</dbReference>
<dbReference type="SFLD" id="SFLDS00003">
    <property type="entry name" value="Haloacid_Dehalogenase"/>
    <property type="match status" value="1"/>
</dbReference>
<dbReference type="SUPFAM" id="SSF56784">
    <property type="entry name" value="HAD-like"/>
    <property type="match status" value="1"/>
</dbReference>
<protein>
    <recommendedName>
        <fullName evidence="1">Pyrophosphatase PpaX</fullName>
        <ecNumber evidence="1">3.6.1.1</ecNumber>
    </recommendedName>
</protein>
<organism>
    <name type="scientific">Halalkalibacterium halodurans (strain ATCC BAA-125 / DSM 18197 / FERM 7344 / JCM 9153 / C-125)</name>
    <name type="common">Bacillus halodurans</name>
    <dbReference type="NCBI Taxonomy" id="272558"/>
    <lineage>
        <taxon>Bacteria</taxon>
        <taxon>Bacillati</taxon>
        <taxon>Bacillota</taxon>
        <taxon>Bacilli</taxon>
        <taxon>Bacillales</taxon>
        <taxon>Bacillaceae</taxon>
        <taxon>Halalkalibacterium (ex Joshi et al. 2022)</taxon>
    </lineage>
</organism>
<name>PPAX_HALH5</name>
<proteinExistence type="inferred from homology"/>
<accession>Q9K6Y7</accession>
<gene>
    <name evidence="1" type="primary">ppaX</name>
    <name type="ordered locus">BH3587</name>
</gene>